<comment type="subcellular location">
    <subcellularLocation>
        <location evidence="3">Mitochondrion</location>
    </subcellularLocation>
</comment>
<comment type="similarity">
    <text evidence="2">Belongs to the PPR family. P subfamily.</text>
</comment>
<comment type="sequence caution" evidence="2">
    <conflict type="erroneous initiation">
        <sequence resource="EMBL-CDS" id="BAB01462"/>
    </conflict>
</comment>
<comment type="online information" name="Pentatricopeptide repeat proteins">
    <link uri="https://ppr.plantenergy.uwa.edu.au"/>
</comment>
<reference key="1">
    <citation type="journal article" date="2000" name="DNA Res.">
        <title>Structural analysis of Arabidopsis thaliana chromosome 3. II. Sequence features of the 4,251,695 bp regions covered by 90 P1, TAC and BAC clones.</title>
        <authorList>
            <person name="Kaneko T."/>
            <person name="Katoh T."/>
            <person name="Sato S."/>
            <person name="Nakamura Y."/>
            <person name="Asamizu E."/>
            <person name="Tabata S."/>
        </authorList>
    </citation>
    <scope>NUCLEOTIDE SEQUENCE [LARGE SCALE GENOMIC DNA]</scope>
    <source>
        <strain>cv. Columbia</strain>
    </source>
</reference>
<reference key="2">
    <citation type="journal article" date="2017" name="Plant J.">
        <title>Araport11: a complete reannotation of the Arabidopsis thaliana reference genome.</title>
        <authorList>
            <person name="Cheng C.Y."/>
            <person name="Krishnakumar V."/>
            <person name="Chan A.P."/>
            <person name="Thibaud-Nissen F."/>
            <person name="Schobel S."/>
            <person name="Town C.D."/>
        </authorList>
    </citation>
    <scope>GENOME REANNOTATION</scope>
    <source>
        <strain>cv. Columbia</strain>
    </source>
</reference>
<reference key="3">
    <citation type="journal article" date="2003" name="Science">
        <title>Empirical analysis of transcriptional activity in the Arabidopsis genome.</title>
        <authorList>
            <person name="Yamada K."/>
            <person name="Lim J."/>
            <person name="Dale J.M."/>
            <person name="Chen H."/>
            <person name="Shinn P."/>
            <person name="Palm C.J."/>
            <person name="Southwick A.M."/>
            <person name="Wu H.C."/>
            <person name="Kim C.J."/>
            <person name="Nguyen M."/>
            <person name="Pham P.K."/>
            <person name="Cheuk R.F."/>
            <person name="Karlin-Newmann G."/>
            <person name="Liu S.X."/>
            <person name="Lam B."/>
            <person name="Sakano H."/>
            <person name="Wu T."/>
            <person name="Yu G."/>
            <person name="Miranda M."/>
            <person name="Quach H.L."/>
            <person name="Tripp M."/>
            <person name="Chang C.H."/>
            <person name="Lee J.M."/>
            <person name="Toriumi M.J."/>
            <person name="Chan M.M."/>
            <person name="Tang C.C."/>
            <person name="Onodera C.S."/>
            <person name="Deng J.M."/>
            <person name="Akiyama K."/>
            <person name="Ansari Y."/>
            <person name="Arakawa T."/>
            <person name="Banh J."/>
            <person name="Banno F."/>
            <person name="Bowser L."/>
            <person name="Brooks S.Y."/>
            <person name="Carninci P."/>
            <person name="Chao Q."/>
            <person name="Choy N."/>
            <person name="Enju A."/>
            <person name="Goldsmith A.D."/>
            <person name="Gurjal M."/>
            <person name="Hansen N.F."/>
            <person name="Hayashizaki Y."/>
            <person name="Johnson-Hopson C."/>
            <person name="Hsuan V.W."/>
            <person name="Iida K."/>
            <person name="Karnes M."/>
            <person name="Khan S."/>
            <person name="Koesema E."/>
            <person name="Ishida J."/>
            <person name="Jiang P.X."/>
            <person name="Jones T."/>
            <person name="Kawai J."/>
            <person name="Kamiya A."/>
            <person name="Meyers C."/>
            <person name="Nakajima M."/>
            <person name="Narusaka M."/>
            <person name="Seki M."/>
            <person name="Sakurai T."/>
            <person name="Satou M."/>
            <person name="Tamse R."/>
            <person name="Vaysberg M."/>
            <person name="Wallender E.K."/>
            <person name="Wong C."/>
            <person name="Yamamura Y."/>
            <person name="Yuan S."/>
            <person name="Shinozaki K."/>
            <person name="Davis R.W."/>
            <person name="Theologis A."/>
            <person name="Ecker J.R."/>
        </authorList>
    </citation>
    <scope>NUCLEOTIDE SEQUENCE [LARGE SCALE MRNA]</scope>
    <source>
        <strain>cv. Columbia</strain>
    </source>
</reference>
<reference key="4">
    <citation type="submission" date="2004-09" db="EMBL/GenBank/DDBJ databases">
        <title>Large-scale analysis of RIKEN Arabidopsis full-length (RAFL) cDNAs.</title>
        <authorList>
            <person name="Totoki Y."/>
            <person name="Seki M."/>
            <person name="Ishida J."/>
            <person name="Nakajima M."/>
            <person name="Enju A."/>
            <person name="Kamiya A."/>
            <person name="Narusaka M."/>
            <person name="Shin-i T."/>
            <person name="Nakagawa M."/>
            <person name="Sakamoto N."/>
            <person name="Oishi K."/>
            <person name="Kohara Y."/>
            <person name="Kobayashi M."/>
            <person name="Toyoda A."/>
            <person name="Sakaki Y."/>
            <person name="Sakurai T."/>
            <person name="Iida K."/>
            <person name="Akiyama K."/>
            <person name="Satou M."/>
            <person name="Toyoda T."/>
            <person name="Konagaya A."/>
            <person name="Carninci P."/>
            <person name="Kawai J."/>
            <person name="Hayashizaki Y."/>
            <person name="Shinozaki K."/>
        </authorList>
    </citation>
    <scope>NUCLEOTIDE SEQUENCE [LARGE SCALE MRNA]</scope>
    <source>
        <strain>cv. Columbia</strain>
    </source>
</reference>
<reference key="5">
    <citation type="journal article" date="2004" name="Plant Cell">
        <title>Genome-wide analysis of Arabidopsis pentatricopeptide repeat proteins reveals their essential role in organelle biogenesis.</title>
        <authorList>
            <person name="Lurin C."/>
            <person name="Andres C."/>
            <person name="Aubourg S."/>
            <person name="Bellaoui M."/>
            <person name="Bitton F."/>
            <person name="Bruyere C."/>
            <person name="Caboche M."/>
            <person name="Debast C."/>
            <person name="Gualberto J."/>
            <person name="Hoffmann B."/>
            <person name="Lecharny A."/>
            <person name="Le Ret M."/>
            <person name="Martin-Magniette M.-L."/>
            <person name="Mireau H."/>
            <person name="Peeters N."/>
            <person name="Renou J.-P."/>
            <person name="Szurek B."/>
            <person name="Taconnat L."/>
            <person name="Small I."/>
        </authorList>
    </citation>
    <scope>GENE FAMILY</scope>
</reference>
<reference key="6">
    <citation type="journal article" date="2015" name="J. Exp. Bot.">
        <title>Identification of cleavage sites and substrate proteins for two mitochondrial intermediate peptidases in Arabidopsis thaliana.</title>
        <authorList>
            <person name="Carrie C."/>
            <person name="Venne A.S."/>
            <person name="Zahedi R.P."/>
            <person name="Soll J."/>
        </authorList>
    </citation>
    <scope>IDENTIFICATION BY MASS SPECTROMETRY</scope>
    <scope>CLEAVAGE OF TRANSIT PEPTIDE AFTER TYR-28</scope>
</reference>
<evidence type="ECO:0000269" key="1">
    <source>
    </source>
</evidence>
<evidence type="ECO:0000305" key="2"/>
<evidence type="ECO:0000305" key="3">
    <source>
    </source>
</evidence>
<name>PP247_ARATH</name>
<gene>
    <name type="ordered locus">At3g22470</name>
    <name type="ORF">F16J14.3</name>
</gene>
<organism>
    <name type="scientific">Arabidopsis thaliana</name>
    <name type="common">Mouse-ear cress</name>
    <dbReference type="NCBI Taxonomy" id="3702"/>
    <lineage>
        <taxon>Eukaryota</taxon>
        <taxon>Viridiplantae</taxon>
        <taxon>Streptophyta</taxon>
        <taxon>Embryophyta</taxon>
        <taxon>Tracheophyta</taxon>
        <taxon>Spermatophyta</taxon>
        <taxon>Magnoliopsida</taxon>
        <taxon>eudicotyledons</taxon>
        <taxon>Gunneridae</taxon>
        <taxon>Pentapetalae</taxon>
        <taxon>rosids</taxon>
        <taxon>malvids</taxon>
        <taxon>Brassicales</taxon>
        <taxon>Brassicaceae</taxon>
        <taxon>Camelineae</taxon>
        <taxon>Arabidopsis</taxon>
    </lineage>
</organism>
<feature type="transit peptide" description="Mitochondrion" evidence="1">
    <location>
        <begin position="1"/>
        <end position="28"/>
    </location>
</feature>
<feature type="chain" id="PRO_0000356106" description="Pentatricopeptide repeat-containing protein At3g22470, mitochondrial">
    <location>
        <begin position="29"/>
        <end position="619"/>
    </location>
</feature>
<feature type="repeat" description="PPR 1">
    <location>
        <begin position="69"/>
        <end position="103"/>
    </location>
</feature>
<feature type="repeat" description="PPR 2">
    <location>
        <begin position="104"/>
        <end position="138"/>
    </location>
</feature>
<feature type="repeat" description="PPR 3">
    <location>
        <begin position="139"/>
        <end position="173"/>
    </location>
</feature>
<feature type="repeat" description="PPR 4">
    <location>
        <begin position="174"/>
        <end position="208"/>
    </location>
</feature>
<feature type="repeat" description="PPR 5">
    <location>
        <begin position="209"/>
        <end position="243"/>
    </location>
</feature>
<feature type="repeat" description="PPR 6">
    <location>
        <begin position="244"/>
        <end position="278"/>
    </location>
</feature>
<feature type="repeat" description="PPR 7">
    <location>
        <begin position="279"/>
        <end position="313"/>
    </location>
</feature>
<feature type="repeat" description="PPR 8">
    <location>
        <begin position="314"/>
        <end position="348"/>
    </location>
</feature>
<feature type="repeat" description="PPR 9">
    <location>
        <begin position="349"/>
        <end position="383"/>
    </location>
</feature>
<feature type="repeat" description="PPR 10">
    <location>
        <begin position="384"/>
        <end position="418"/>
    </location>
</feature>
<feature type="repeat" description="PPR 11">
    <location>
        <begin position="419"/>
        <end position="453"/>
    </location>
</feature>
<feature type="repeat" description="PPR 12">
    <location>
        <begin position="454"/>
        <end position="488"/>
    </location>
</feature>
<feature type="repeat" description="PPR 13">
    <location>
        <begin position="489"/>
        <end position="523"/>
    </location>
</feature>
<feature type="repeat" description="PPR 14">
    <location>
        <begin position="524"/>
        <end position="558"/>
    </location>
</feature>
<feature type="repeat" description="PPR 15">
    <location>
        <begin position="559"/>
        <end position="593"/>
    </location>
</feature>
<accession>Q6NQ83</accession>
<accession>Q9LJ99</accession>
<protein>
    <recommendedName>
        <fullName>Pentatricopeptide repeat-containing protein At3g22470, mitochondrial</fullName>
    </recommendedName>
</protein>
<sequence>MIQRLIPLNRKASNFTQILEKGTSLLHYSSITEAKLSYKERLRNGIVDIKVNDAIDLFESMIQSRPLPTPIDFNRLCSAVARTKQYDLVLGFCKGMELNGIEHDMYTMTIMINCYCRKKKLLFAFSVLGRAWKLGYEPDTITFSTLVNGFCLEGRVSEAVALVDRMVEMKQRPDLVTVSTLINGLCLKGRVSEALVLIDRMVEYGFQPDEVTYGPVLNRLCKSGNSALALDLFRKMEERNIKASVVQYSIVIDSLCKDGSFDDALSLFNEMEMKGIKADVVTYSSLIGGLCNDGKWDDGAKMLREMIGRNIIPDVVTFSALIDVFVKEGKLLEAKELYNEMITRGIAPDTITYNSLIDGFCKENCLHEANQMFDLMVSKGCEPDIVTYSILINSYCKAKRVDDGMRLFREISSKGLIPNTITYNTLVLGFCQSGKLNAAKELFQEMVSRGVPPSVVTYGILLDGLCDNGELNKALEIFEKMQKSRMTLGIGIYNIIIHGMCNASKVDDAWSLFCSLSDKGVKPDVVTYNVMIGGLCKKGSLSEADMLFRKMKEDGCTPDDFTYNILIRAHLGGSGLISSVELIEEMKVCGFSADSSTIKMVIDMLSDRRLDKSFLDMLS</sequence>
<dbReference type="EMBL" id="AP000731">
    <property type="protein sequence ID" value="BAB01462.1"/>
    <property type="status" value="ALT_INIT"/>
    <property type="molecule type" value="Genomic_DNA"/>
</dbReference>
<dbReference type="EMBL" id="CP002686">
    <property type="protein sequence ID" value="AEE76643.1"/>
    <property type="molecule type" value="Genomic_DNA"/>
</dbReference>
<dbReference type="EMBL" id="BT010576">
    <property type="protein sequence ID" value="AAQ65199.1"/>
    <property type="molecule type" value="mRNA"/>
</dbReference>
<dbReference type="EMBL" id="AK175328">
    <property type="protein sequence ID" value="BAD43091.1"/>
    <property type="molecule type" value="mRNA"/>
</dbReference>
<dbReference type="RefSeq" id="NP_188886.1">
    <property type="nucleotide sequence ID" value="NM_113146.2"/>
</dbReference>
<dbReference type="SMR" id="Q6NQ83"/>
<dbReference type="FunCoup" id="Q6NQ83">
    <property type="interactions" value="91"/>
</dbReference>
<dbReference type="GlyGen" id="Q6NQ83">
    <property type="glycosylation" value="1 site"/>
</dbReference>
<dbReference type="PaxDb" id="3702-AT3G22470.1"/>
<dbReference type="EnsemblPlants" id="AT3G22470.1">
    <property type="protein sequence ID" value="AT3G22470.1"/>
    <property type="gene ID" value="AT3G22470"/>
</dbReference>
<dbReference type="GeneID" id="821818"/>
<dbReference type="Gramene" id="AT3G22470.1">
    <property type="protein sequence ID" value="AT3G22470.1"/>
    <property type="gene ID" value="AT3G22470"/>
</dbReference>
<dbReference type="KEGG" id="ath:AT3G22470"/>
<dbReference type="Araport" id="AT3G22470"/>
<dbReference type="TAIR" id="AT3G22470">
    <property type="gene designation" value="PPR3"/>
</dbReference>
<dbReference type="eggNOG" id="KOG4197">
    <property type="taxonomic scope" value="Eukaryota"/>
</dbReference>
<dbReference type="HOGENOM" id="CLU_002706_49_12_1"/>
<dbReference type="InParanoid" id="Q6NQ83"/>
<dbReference type="OMA" id="MMEEKGF"/>
<dbReference type="PhylomeDB" id="Q6NQ83"/>
<dbReference type="PRO" id="PR:Q6NQ83"/>
<dbReference type="Proteomes" id="UP000006548">
    <property type="component" value="Chromosome 3"/>
</dbReference>
<dbReference type="ExpressionAtlas" id="Q6NQ83">
    <property type="expression patterns" value="baseline and differential"/>
</dbReference>
<dbReference type="GO" id="GO:0005739">
    <property type="term" value="C:mitochondrion"/>
    <property type="evidence" value="ECO:0007669"/>
    <property type="project" value="UniProtKB-SubCell"/>
</dbReference>
<dbReference type="FunFam" id="1.25.40.10:FF:000294">
    <property type="entry name" value="Pentatricopeptide repeat-containing protein At1g09900"/>
    <property type="match status" value="1"/>
</dbReference>
<dbReference type="FunFam" id="1.25.40.10:FF:000558">
    <property type="entry name" value="Pentatricopeptide repeat-containing protein At5g39710"/>
    <property type="match status" value="1"/>
</dbReference>
<dbReference type="Gene3D" id="1.25.40.10">
    <property type="entry name" value="Tetratricopeptide repeat domain"/>
    <property type="match status" value="6"/>
</dbReference>
<dbReference type="InterPro" id="IPR051240">
    <property type="entry name" value="Mito_RNA-Proc/Resp"/>
</dbReference>
<dbReference type="InterPro" id="IPR002885">
    <property type="entry name" value="Pentatricopeptide_rpt"/>
</dbReference>
<dbReference type="InterPro" id="IPR011990">
    <property type="entry name" value="TPR-like_helical_dom_sf"/>
</dbReference>
<dbReference type="NCBIfam" id="TIGR00756">
    <property type="entry name" value="PPR"/>
    <property type="match status" value="13"/>
</dbReference>
<dbReference type="PANTHER" id="PTHR47933:SF45">
    <property type="entry name" value="PENTACOTRIPEPTIDE-REPEAT REGION OF PRORP DOMAIN-CONTAINING PROTEIN"/>
    <property type="match status" value="1"/>
</dbReference>
<dbReference type="PANTHER" id="PTHR47933">
    <property type="entry name" value="PENTATRICOPEPTIDE REPEAT-CONTAINING PROTEIN 1, MITOCHONDRIAL"/>
    <property type="match status" value="1"/>
</dbReference>
<dbReference type="Pfam" id="PF01535">
    <property type="entry name" value="PPR"/>
    <property type="match status" value="2"/>
</dbReference>
<dbReference type="Pfam" id="PF12854">
    <property type="entry name" value="PPR_1"/>
    <property type="match status" value="2"/>
</dbReference>
<dbReference type="Pfam" id="PF13041">
    <property type="entry name" value="PPR_2"/>
    <property type="match status" value="5"/>
</dbReference>
<dbReference type="SUPFAM" id="SSF81901">
    <property type="entry name" value="HCP-like"/>
    <property type="match status" value="1"/>
</dbReference>
<dbReference type="PROSITE" id="PS51375">
    <property type="entry name" value="PPR"/>
    <property type="match status" value="15"/>
</dbReference>
<keyword id="KW-0496">Mitochondrion</keyword>
<keyword id="KW-1185">Reference proteome</keyword>
<keyword id="KW-0677">Repeat</keyword>
<keyword id="KW-0809">Transit peptide</keyword>
<proteinExistence type="evidence at protein level"/>